<accession>B7V1E3</accession>
<comment type="function">
    <text evidence="1">Catalyzes the pyruvoyl-dependent decarboxylation of aspartate to produce beta-alanine.</text>
</comment>
<comment type="catalytic activity">
    <reaction evidence="1">
        <text>L-aspartate + H(+) = beta-alanine + CO2</text>
        <dbReference type="Rhea" id="RHEA:19497"/>
        <dbReference type="ChEBI" id="CHEBI:15378"/>
        <dbReference type="ChEBI" id="CHEBI:16526"/>
        <dbReference type="ChEBI" id="CHEBI:29991"/>
        <dbReference type="ChEBI" id="CHEBI:57966"/>
        <dbReference type="EC" id="4.1.1.11"/>
    </reaction>
</comment>
<comment type="cofactor">
    <cofactor evidence="1">
        <name>pyruvate</name>
        <dbReference type="ChEBI" id="CHEBI:15361"/>
    </cofactor>
    <text evidence="1">Binds 1 pyruvoyl group covalently per subunit.</text>
</comment>
<comment type="pathway">
    <text evidence="1">Cofactor biosynthesis; (R)-pantothenate biosynthesis; beta-alanine from L-aspartate: step 1/1.</text>
</comment>
<comment type="subunit">
    <text evidence="1">Heterooctamer of four alpha and four beta subunits.</text>
</comment>
<comment type="subcellular location">
    <subcellularLocation>
        <location evidence="1">Cytoplasm</location>
    </subcellularLocation>
</comment>
<comment type="PTM">
    <text evidence="1">Is synthesized initially as an inactive proenzyme, which is activated by self-cleavage at a specific serine bond to produce a beta-subunit with a hydroxyl group at its C-terminus and an alpha-subunit with a pyruvoyl group at its N-terminus.</text>
</comment>
<comment type="similarity">
    <text evidence="1">Belongs to the PanD family.</text>
</comment>
<organism>
    <name type="scientific">Pseudomonas aeruginosa (strain LESB58)</name>
    <dbReference type="NCBI Taxonomy" id="557722"/>
    <lineage>
        <taxon>Bacteria</taxon>
        <taxon>Pseudomonadati</taxon>
        <taxon>Pseudomonadota</taxon>
        <taxon>Gammaproteobacteria</taxon>
        <taxon>Pseudomonadales</taxon>
        <taxon>Pseudomonadaceae</taxon>
        <taxon>Pseudomonas</taxon>
    </lineage>
</organism>
<feature type="chain" id="PRO_1000124859" description="Aspartate 1-decarboxylase beta chain" evidence="1">
    <location>
        <begin position="1"/>
        <end position="24"/>
    </location>
</feature>
<feature type="chain" id="PRO_1000124860" description="Aspartate 1-decarboxylase alpha chain" evidence="1">
    <location>
        <begin position="25"/>
        <end position="126"/>
    </location>
</feature>
<feature type="active site" description="Schiff-base intermediate with substrate; via pyruvic acid" evidence="1">
    <location>
        <position position="25"/>
    </location>
</feature>
<feature type="active site" description="Proton donor" evidence="1">
    <location>
        <position position="58"/>
    </location>
</feature>
<feature type="binding site" evidence="1">
    <location>
        <position position="57"/>
    </location>
    <ligand>
        <name>substrate</name>
    </ligand>
</feature>
<feature type="binding site" evidence="1">
    <location>
        <begin position="73"/>
        <end position="75"/>
    </location>
    <ligand>
        <name>substrate</name>
    </ligand>
</feature>
<feature type="modified residue" description="Pyruvic acid (Ser)" evidence="1">
    <location>
        <position position="25"/>
    </location>
</feature>
<protein>
    <recommendedName>
        <fullName evidence="1">Aspartate 1-decarboxylase</fullName>
        <ecNumber evidence="1">4.1.1.11</ecNumber>
    </recommendedName>
    <alternativeName>
        <fullName evidence="1">Aspartate alpha-decarboxylase</fullName>
    </alternativeName>
    <component>
        <recommendedName>
            <fullName evidence="1">Aspartate 1-decarboxylase beta chain</fullName>
        </recommendedName>
    </component>
    <component>
        <recommendedName>
            <fullName evidence="1">Aspartate 1-decarboxylase alpha chain</fullName>
        </recommendedName>
    </component>
</protein>
<name>PAND_PSEA8</name>
<evidence type="ECO:0000255" key="1">
    <source>
        <dbReference type="HAMAP-Rule" id="MF_00446"/>
    </source>
</evidence>
<keyword id="KW-0068">Autocatalytic cleavage</keyword>
<keyword id="KW-0963">Cytoplasm</keyword>
<keyword id="KW-0210">Decarboxylase</keyword>
<keyword id="KW-0456">Lyase</keyword>
<keyword id="KW-0566">Pantothenate biosynthesis</keyword>
<keyword id="KW-0670">Pyruvate</keyword>
<keyword id="KW-0704">Schiff base</keyword>
<keyword id="KW-0865">Zymogen</keyword>
<dbReference type="EC" id="4.1.1.11" evidence="1"/>
<dbReference type="EMBL" id="FM209186">
    <property type="protein sequence ID" value="CAW29870.1"/>
    <property type="molecule type" value="Genomic_DNA"/>
</dbReference>
<dbReference type="RefSeq" id="WP_003095150.1">
    <property type="nucleotide sequence ID" value="NC_011770.1"/>
</dbReference>
<dbReference type="SMR" id="B7V1E3"/>
<dbReference type="KEGG" id="pag:PLES_51161"/>
<dbReference type="HOGENOM" id="CLU_115305_2_1_6"/>
<dbReference type="UniPathway" id="UPA00028">
    <property type="reaction ID" value="UER00002"/>
</dbReference>
<dbReference type="GO" id="GO:0005829">
    <property type="term" value="C:cytosol"/>
    <property type="evidence" value="ECO:0007669"/>
    <property type="project" value="TreeGrafter"/>
</dbReference>
<dbReference type="GO" id="GO:0004068">
    <property type="term" value="F:aspartate 1-decarboxylase activity"/>
    <property type="evidence" value="ECO:0007669"/>
    <property type="project" value="UniProtKB-UniRule"/>
</dbReference>
<dbReference type="GO" id="GO:0006523">
    <property type="term" value="P:alanine biosynthetic process"/>
    <property type="evidence" value="ECO:0007669"/>
    <property type="project" value="InterPro"/>
</dbReference>
<dbReference type="GO" id="GO:0015940">
    <property type="term" value="P:pantothenate biosynthetic process"/>
    <property type="evidence" value="ECO:0007669"/>
    <property type="project" value="UniProtKB-UniRule"/>
</dbReference>
<dbReference type="CDD" id="cd06919">
    <property type="entry name" value="Asp_decarbox"/>
    <property type="match status" value="1"/>
</dbReference>
<dbReference type="Gene3D" id="2.40.40.20">
    <property type="match status" value="1"/>
</dbReference>
<dbReference type="HAMAP" id="MF_00446">
    <property type="entry name" value="PanD"/>
    <property type="match status" value="1"/>
</dbReference>
<dbReference type="InterPro" id="IPR009010">
    <property type="entry name" value="Asp_de-COase-like_dom_sf"/>
</dbReference>
<dbReference type="InterPro" id="IPR003190">
    <property type="entry name" value="Asp_decarbox"/>
</dbReference>
<dbReference type="NCBIfam" id="TIGR00223">
    <property type="entry name" value="panD"/>
    <property type="match status" value="1"/>
</dbReference>
<dbReference type="PANTHER" id="PTHR21012">
    <property type="entry name" value="ASPARTATE 1-DECARBOXYLASE"/>
    <property type="match status" value="1"/>
</dbReference>
<dbReference type="PANTHER" id="PTHR21012:SF0">
    <property type="entry name" value="ASPARTATE 1-DECARBOXYLASE"/>
    <property type="match status" value="1"/>
</dbReference>
<dbReference type="Pfam" id="PF02261">
    <property type="entry name" value="Asp_decarbox"/>
    <property type="match status" value="1"/>
</dbReference>
<dbReference type="PIRSF" id="PIRSF006246">
    <property type="entry name" value="Asp_decarbox"/>
    <property type="match status" value="1"/>
</dbReference>
<dbReference type="SUPFAM" id="SSF50692">
    <property type="entry name" value="ADC-like"/>
    <property type="match status" value="1"/>
</dbReference>
<reference key="1">
    <citation type="journal article" date="2009" name="Genome Res.">
        <title>Newly introduced genomic prophage islands are critical determinants of in vivo competitiveness in the Liverpool epidemic strain of Pseudomonas aeruginosa.</title>
        <authorList>
            <person name="Winstanley C."/>
            <person name="Langille M.G.I."/>
            <person name="Fothergill J.L."/>
            <person name="Kukavica-Ibrulj I."/>
            <person name="Paradis-Bleau C."/>
            <person name="Sanschagrin F."/>
            <person name="Thomson N.R."/>
            <person name="Winsor G.L."/>
            <person name="Quail M.A."/>
            <person name="Lennard N."/>
            <person name="Bignell A."/>
            <person name="Clarke L."/>
            <person name="Seeger K."/>
            <person name="Saunders D."/>
            <person name="Harris D."/>
            <person name="Parkhill J."/>
            <person name="Hancock R.E.W."/>
            <person name="Brinkman F.S.L."/>
            <person name="Levesque R.C."/>
        </authorList>
    </citation>
    <scope>NUCLEOTIDE SEQUENCE [LARGE SCALE GENOMIC DNA]</scope>
    <source>
        <strain>LESB58</strain>
    </source>
</reference>
<proteinExistence type="inferred from homology"/>
<gene>
    <name evidence="1" type="primary">panD</name>
    <name type="ordered locus">PLES_51161</name>
</gene>
<sequence length="126" mass="13930">MHAIMLKAKLHRAEVTHAVLDYEGSCAIDGDWLDLSGIREYEQIQIYNVDNGERFTTYAIRAENGSKMISVNGAAAHKAKVGDRVIICAYAHYSEAELASHKPRMLYMAPGNQLSHTSEAIPIQVA</sequence>